<dbReference type="EC" id="2.7.1.35" evidence="1"/>
<dbReference type="EMBL" id="CP000926">
    <property type="protein sequence ID" value="ABZ01288.1"/>
    <property type="molecule type" value="Genomic_DNA"/>
</dbReference>
<dbReference type="RefSeq" id="WP_012274885.1">
    <property type="nucleotide sequence ID" value="NC_010322.1"/>
</dbReference>
<dbReference type="SMR" id="B0KR83"/>
<dbReference type="KEGG" id="ppg:PputGB1_5406"/>
<dbReference type="eggNOG" id="COG2240">
    <property type="taxonomic scope" value="Bacteria"/>
</dbReference>
<dbReference type="HOGENOM" id="CLU_046496_3_0_6"/>
<dbReference type="UniPathway" id="UPA01068">
    <property type="reaction ID" value="UER00298"/>
</dbReference>
<dbReference type="Proteomes" id="UP000002157">
    <property type="component" value="Chromosome"/>
</dbReference>
<dbReference type="GO" id="GO:0005829">
    <property type="term" value="C:cytosol"/>
    <property type="evidence" value="ECO:0007669"/>
    <property type="project" value="TreeGrafter"/>
</dbReference>
<dbReference type="GO" id="GO:0005524">
    <property type="term" value="F:ATP binding"/>
    <property type="evidence" value="ECO:0007669"/>
    <property type="project" value="UniProtKB-UniRule"/>
</dbReference>
<dbReference type="GO" id="GO:0000287">
    <property type="term" value="F:magnesium ion binding"/>
    <property type="evidence" value="ECO:0007669"/>
    <property type="project" value="UniProtKB-UniRule"/>
</dbReference>
<dbReference type="GO" id="GO:0008478">
    <property type="term" value="F:pyridoxal kinase activity"/>
    <property type="evidence" value="ECO:0007669"/>
    <property type="project" value="UniProtKB-UniRule"/>
</dbReference>
<dbReference type="GO" id="GO:0009443">
    <property type="term" value="P:pyridoxal 5'-phosphate salvage"/>
    <property type="evidence" value="ECO:0007669"/>
    <property type="project" value="UniProtKB-UniRule"/>
</dbReference>
<dbReference type="CDD" id="cd01173">
    <property type="entry name" value="pyridoxal_pyridoxamine_kinase"/>
    <property type="match status" value="1"/>
</dbReference>
<dbReference type="FunFam" id="3.40.1190.20:FF:000008">
    <property type="entry name" value="Pyridoxal kinase PdxY"/>
    <property type="match status" value="1"/>
</dbReference>
<dbReference type="Gene3D" id="3.40.1190.20">
    <property type="match status" value="1"/>
</dbReference>
<dbReference type="HAMAP" id="MF_01639">
    <property type="entry name" value="PdxY"/>
    <property type="match status" value="1"/>
</dbReference>
<dbReference type="InterPro" id="IPR013749">
    <property type="entry name" value="PM/HMP-P_kinase-1"/>
</dbReference>
<dbReference type="InterPro" id="IPR004625">
    <property type="entry name" value="PyrdxlKinase"/>
</dbReference>
<dbReference type="InterPro" id="IPR023685">
    <property type="entry name" value="Pyridoxal_kinase_PdxY"/>
</dbReference>
<dbReference type="InterPro" id="IPR029056">
    <property type="entry name" value="Ribokinase-like"/>
</dbReference>
<dbReference type="NCBIfam" id="NF004398">
    <property type="entry name" value="PRK05756.1"/>
    <property type="match status" value="1"/>
</dbReference>
<dbReference type="NCBIfam" id="TIGR00687">
    <property type="entry name" value="pyridox_kin"/>
    <property type="match status" value="1"/>
</dbReference>
<dbReference type="PANTHER" id="PTHR10534">
    <property type="entry name" value="PYRIDOXAL KINASE"/>
    <property type="match status" value="1"/>
</dbReference>
<dbReference type="PANTHER" id="PTHR10534:SF2">
    <property type="entry name" value="PYRIDOXAL KINASE"/>
    <property type="match status" value="1"/>
</dbReference>
<dbReference type="Pfam" id="PF08543">
    <property type="entry name" value="Phos_pyr_kin"/>
    <property type="match status" value="1"/>
</dbReference>
<dbReference type="SUPFAM" id="SSF53613">
    <property type="entry name" value="Ribokinase-like"/>
    <property type="match status" value="1"/>
</dbReference>
<keyword id="KW-0067">ATP-binding</keyword>
<keyword id="KW-0418">Kinase</keyword>
<keyword id="KW-0460">Magnesium</keyword>
<keyword id="KW-0547">Nucleotide-binding</keyword>
<keyword id="KW-0808">Transferase</keyword>
<name>PDXY_PSEPG</name>
<feature type="chain" id="PRO_1000088205" description="Pyridoxal kinase PdxY">
    <location>
        <begin position="1"/>
        <end position="290"/>
    </location>
</feature>
<feature type="binding site" evidence="1">
    <location>
        <position position="12"/>
    </location>
    <ligand>
        <name>substrate</name>
    </ligand>
</feature>
<feature type="binding site" evidence="1">
    <location>
        <begin position="47"/>
        <end position="48"/>
    </location>
    <ligand>
        <name>substrate</name>
    </ligand>
</feature>
<feature type="binding site" evidence="1">
    <location>
        <position position="114"/>
    </location>
    <ligand>
        <name>ATP</name>
        <dbReference type="ChEBI" id="CHEBI:30616"/>
    </ligand>
</feature>
<feature type="binding site" evidence="1">
    <location>
        <position position="151"/>
    </location>
    <ligand>
        <name>ATP</name>
        <dbReference type="ChEBI" id="CHEBI:30616"/>
    </ligand>
</feature>
<feature type="binding site" evidence="1">
    <location>
        <position position="184"/>
    </location>
    <ligand>
        <name>ATP</name>
        <dbReference type="ChEBI" id="CHEBI:30616"/>
    </ligand>
</feature>
<feature type="binding site" evidence="1">
    <location>
        <begin position="211"/>
        <end position="214"/>
    </location>
    <ligand>
        <name>ATP</name>
        <dbReference type="ChEBI" id="CHEBI:30616"/>
    </ligand>
</feature>
<feature type="binding site" evidence="1">
    <location>
        <position position="225"/>
    </location>
    <ligand>
        <name>substrate</name>
    </ligand>
</feature>
<reference key="1">
    <citation type="submission" date="2008-01" db="EMBL/GenBank/DDBJ databases">
        <title>Complete sequence of Pseudomonas putida GB-1.</title>
        <authorList>
            <consortium name="US DOE Joint Genome Institute"/>
            <person name="Copeland A."/>
            <person name="Lucas S."/>
            <person name="Lapidus A."/>
            <person name="Barry K."/>
            <person name="Glavina del Rio T."/>
            <person name="Dalin E."/>
            <person name="Tice H."/>
            <person name="Pitluck S."/>
            <person name="Bruce D."/>
            <person name="Goodwin L."/>
            <person name="Chertkov O."/>
            <person name="Brettin T."/>
            <person name="Detter J.C."/>
            <person name="Han C."/>
            <person name="Kuske C.R."/>
            <person name="Schmutz J."/>
            <person name="Larimer F."/>
            <person name="Land M."/>
            <person name="Hauser L."/>
            <person name="Kyrpides N."/>
            <person name="Kim E."/>
            <person name="McCarthy J.K."/>
            <person name="Richardson P."/>
        </authorList>
    </citation>
    <scope>NUCLEOTIDE SEQUENCE [LARGE SCALE GENOMIC DNA]</scope>
    <source>
        <strain>GB-1</strain>
    </source>
</reference>
<accession>B0KR83</accession>
<protein>
    <recommendedName>
        <fullName evidence="1">Pyridoxal kinase PdxY</fullName>
        <shortName evidence="1">PL kinase</shortName>
        <ecNumber evidence="1">2.7.1.35</ecNumber>
    </recommendedName>
</protein>
<sequence>MKRTPHLLAIQSHVVFGHAGNSAAVFPMQRIGVNVWPLNTVQFSNHTQYGQWAGEVLAPAQIPALVEGISNIGELGHCDAVLSGYLGSAEQGRAILAGVERIKAVNPKALYLCDPVMGHPEKGCIVPPEVSAFLLEEAAARADILCPNQLELDSFCGRRAQSLEDCVNMARSLLKRGPQVVVVKHLAYPGRAEDQFEMLLVTAEHSWHLRRPLLAFPRQPVGVGDLTSGLFLARVMLGDSWVQAFEFTAAAVHEVLLETQACASYELQLVRAQDRIAHPRVRFEAQLLAL</sequence>
<gene>
    <name evidence="1" type="primary">pdxY</name>
    <name type="ordered locus">PputGB1_5406</name>
</gene>
<evidence type="ECO:0000255" key="1">
    <source>
        <dbReference type="HAMAP-Rule" id="MF_01639"/>
    </source>
</evidence>
<organism>
    <name type="scientific">Pseudomonas putida (strain GB-1)</name>
    <dbReference type="NCBI Taxonomy" id="76869"/>
    <lineage>
        <taxon>Bacteria</taxon>
        <taxon>Pseudomonadati</taxon>
        <taxon>Pseudomonadota</taxon>
        <taxon>Gammaproteobacteria</taxon>
        <taxon>Pseudomonadales</taxon>
        <taxon>Pseudomonadaceae</taxon>
        <taxon>Pseudomonas</taxon>
    </lineage>
</organism>
<proteinExistence type="inferred from homology"/>
<comment type="function">
    <text evidence="1">Pyridoxal kinase involved in the salvage pathway of pyridoxal 5'-phosphate (PLP). Catalyzes the phosphorylation of pyridoxal to PLP.</text>
</comment>
<comment type="catalytic activity">
    <reaction evidence="1">
        <text>pyridoxal + ATP = pyridoxal 5'-phosphate + ADP + H(+)</text>
        <dbReference type="Rhea" id="RHEA:10224"/>
        <dbReference type="ChEBI" id="CHEBI:15378"/>
        <dbReference type="ChEBI" id="CHEBI:17310"/>
        <dbReference type="ChEBI" id="CHEBI:30616"/>
        <dbReference type="ChEBI" id="CHEBI:456216"/>
        <dbReference type="ChEBI" id="CHEBI:597326"/>
        <dbReference type="EC" id="2.7.1.35"/>
    </reaction>
</comment>
<comment type="cofactor">
    <cofactor evidence="1">
        <name>Mg(2+)</name>
        <dbReference type="ChEBI" id="CHEBI:18420"/>
    </cofactor>
</comment>
<comment type="pathway">
    <text evidence="1">Cofactor metabolism; pyridoxal 5'-phosphate salvage; pyridoxal 5'-phosphate from pyridoxal: step 1/1.</text>
</comment>
<comment type="subunit">
    <text evidence="1">Homodimer.</text>
</comment>
<comment type="similarity">
    <text evidence="1">Belongs to the pyridoxine kinase family. PdxY subfamily.</text>
</comment>